<accession>B1IFV9</accession>
<keyword id="KW-0021">Allosteric enzyme</keyword>
<keyword id="KW-0067">ATP-binding</keyword>
<keyword id="KW-0963">Cytoplasm</keyword>
<keyword id="KW-0324">Glycolysis</keyword>
<keyword id="KW-0418">Kinase</keyword>
<keyword id="KW-0460">Magnesium</keyword>
<keyword id="KW-0479">Metal-binding</keyword>
<keyword id="KW-0547">Nucleotide-binding</keyword>
<keyword id="KW-0808">Transferase</keyword>
<dbReference type="EC" id="2.7.1.11" evidence="1"/>
<dbReference type="EMBL" id="CP000939">
    <property type="protein sequence ID" value="ACA46632.1"/>
    <property type="molecule type" value="Genomic_DNA"/>
</dbReference>
<dbReference type="RefSeq" id="WP_003357588.1">
    <property type="nucleotide sequence ID" value="NC_010516.1"/>
</dbReference>
<dbReference type="SMR" id="B1IFV9"/>
<dbReference type="GeneID" id="5184682"/>
<dbReference type="KEGG" id="cbb:CLD_1135"/>
<dbReference type="HOGENOM" id="CLU_020655_0_1_9"/>
<dbReference type="UniPathway" id="UPA00109">
    <property type="reaction ID" value="UER00182"/>
</dbReference>
<dbReference type="Proteomes" id="UP000008541">
    <property type="component" value="Chromosome"/>
</dbReference>
<dbReference type="GO" id="GO:0005945">
    <property type="term" value="C:6-phosphofructokinase complex"/>
    <property type="evidence" value="ECO:0007669"/>
    <property type="project" value="TreeGrafter"/>
</dbReference>
<dbReference type="GO" id="GO:0003872">
    <property type="term" value="F:6-phosphofructokinase activity"/>
    <property type="evidence" value="ECO:0007669"/>
    <property type="project" value="UniProtKB-UniRule"/>
</dbReference>
<dbReference type="GO" id="GO:0016208">
    <property type="term" value="F:AMP binding"/>
    <property type="evidence" value="ECO:0007669"/>
    <property type="project" value="TreeGrafter"/>
</dbReference>
<dbReference type="GO" id="GO:0005524">
    <property type="term" value="F:ATP binding"/>
    <property type="evidence" value="ECO:0007669"/>
    <property type="project" value="UniProtKB-KW"/>
</dbReference>
<dbReference type="GO" id="GO:0070095">
    <property type="term" value="F:fructose-6-phosphate binding"/>
    <property type="evidence" value="ECO:0007669"/>
    <property type="project" value="TreeGrafter"/>
</dbReference>
<dbReference type="GO" id="GO:0042802">
    <property type="term" value="F:identical protein binding"/>
    <property type="evidence" value="ECO:0007669"/>
    <property type="project" value="TreeGrafter"/>
</dbReference>
<dbReference type="GO" id="GO:0046872">
    <property type="term" value="F:metal ion binding"/>
    <property type="evidence" value="ECO:0007669"/>
    <property type="project" value="UniProtKB-KW"/>
</dbReference>
<dbReference type="GO" id="GO:0048029">
    <property type="term" value="F:monosaccharide binding"/>
    <property type="evidence" value="ECO:0007669"/>
    <property type="project" value="TreeGrafter"/>
</dbReference>
<dbReference type="GO" id="GO:0061621">
    <property type="term" value="P:canonical glycolysis"/>
    <property type="evidence" value="ECO:0007669"/>
    <property type="project" value="TreeGrafter"/>
</dbReference>
<dbReference type="GO" id="GO:0030388">
    <property type="term" value="P:fructose 1,6-bisphosphate metabolic process"/>
    <property type="evidence" value="ECO:0007669"/>
    <property type="project" value="TreeGrafter"/>
</dbReference>
<dbReference type="GO" id="GO:0006002">
    <property type="term" value="P:fructose 6-phosphate metabolic process"/>
    <property type="evidence" value="ECO:0007669"/>
    <property type="project" value="InterPro"/>
</dbReference>
<dbReference type="FunFam" id="3.40.50.450:FF:000001">
    <property type="entry name" value="ATP-dependent 6-phosphofructokinase"/>
    <property type="match status" value="1"/>
</dbReference>
<dbReference type="FunFam" id="3.40.50.460:FF:000002">
    <property type="entry name" value="ATP-dependent 6-phosphofructokinase"/>
    <property type="match status" value="1"/>
</dbReference>
<dbReference type="Gene3D" id="3.40.50.450">
    <property type="match status" value="1"/>
</dbReference>
<dbReference type="Gene3D" id="3.40.50.460">
    <property type="entry name" value="Phosphofructokinase domain"/>
    <property type="match status" value="1"/>
</dbReference>
<dbReference type="HAMAP" id="MF_00339">
    <property type="entry name" value="Phosphofructokinase_I_B1"/>
    <property type="match status" value="1"/>
</dbReference>
<dbReference type="InterPro" id="IPR022953">
    <property type="entry name" value="ATP_PFK"/>
</dbReference>
<dbReference type="InterPro" id="IPR012003">
    <property type="entry name" value="ATP_PFK_prok-type"/>
</dbReference>
<dbReference type="InterPro" id="IPR012828">
    <property type="entry name" value="PFKA_ATP_prok"/>
</dbReference>
<dbReference type="InterPro" id="IPR015912">
    <property type="entry name" value="Phosphofructokinase_CS"/>
</dbReference>
<dbReference type="InterPro" id="IPR000023">
    <property type="entry name" value="Phosphofructokinase_dom"/>
</dbReference>
<dbReference type="InterPro" id="IPR035966">
    <property type="entry name" value="PKF_sf"/>
</dbReference>
<dbReference type="NCBIfam" id="TIGR02482">
    <property type="entry name" value="PFKA_ATP"/>
    <property type="match status" value="1"/>
</dbReference>
<dbReference type="NCBIfam" id="NF002872">
    <property type="entry name" value="PRK03202.1"/>
    <property type="match status" value="1"/>
</dbReference>
<dbReference type="PANTHER" id="PTHR13697:SF4">
    <property type="entry name" value="ATP-DEPENDENT 6-PHOSPHOFRUCTOKINASE"/>
    <property type="match status" value="1"/>
</dbReference>
<dbReference type="PANTHER" id="PTHR13697">
    <property type="entry name" value="PHOSPHOFRUCTOKINASE"/>
    <property type="match status" value="1"/>
</dbReference>
<dbReference type="Pfam" id="PF00365">
    <property type="entry name" value="PFK"/>
    <property type="match status" value="1"/>
</dbReference>
<dbReference type="PIRSF" id="PIRSF000532">
    <property type="entry name" value="ATP_PFK_prok"/>
    <property type="match status" value="1"/>
</dbReference>
<dbReference type="PRINTS" id="PR00476">
    <property type="entry name" value="PHFRCTKINASE"/>
</dbReference>
<dbReference type="SUPFAM" id="SSF53784">
    <property type="entry name" value="Phosphofructokinase"/>
    <property type="match status" value="1"/>
</dbReference>
<dbReference type="PROSITE" id="PS00433">
    <property type="entry name" value="PHOSPHOFRUCTOKINASE"/>
    <property type="match status" value="1"/>
</dbReference>
<feature type="chain" id="PRO_1000120034" description="ATP-dependent 6-phosphofructokinase">
    <location>
        <begin position="1"/>
        <end position="319"/>
    </location>
</feature>
<feature type="active site" description="Proton acceptor" evidence="1">
    <location>
        <position position="127"/>
    </location>
</feature>
<feature type="binding site" evidence="1">
    <location>
        <position position="11"/>
    </location>
    <ligand>
        <name>ATP</name>
        <dbReference type="ChEBI" id="CHEBI:30616"/>
    </ligand>
</feature>
<feature type="binding site" evidence="1">
    <location>
        <begin position="21"/>
        <end position="25"/>
    </location>
    <ligand>
        <name>ADP</name>
        <dbReference type="ChEBI" id="CHEBI:456216"/>
        <note>allosteric activator; ligand shared between dimeric partners</note>
    </ligand>
</feature>
<feature type="binding site" evidence="1">
    <location>
        <begin position="72"/>
        <end position="73"/>
    </location>
    <ligand>
        <name>ATP</name>
        <dbReference type="ChEBI" id="CHEBI:30616"/>
    </ligand>
</feature>
<feature type="binding site" evidence="1">
    <location>
        <begin position="102"/>
        <end position="105"/>
    </location>
    <ligand>
        <name>ATP</name>
        <dbReference type="ChEBI" id="CHEBI:30616"/>
    </ligand>
</feature>
<feature type="binding site" evidence="1">
    <location>
        <position position="103"/>
    </location>
    <ligand>
        <name>Mg(2+)</name>
        <dbReference type="ChEBI" id="CHEBI:18420"/>
        <note>catalytic</note>
    </ligand>
</feature>
<feature type="binding site" description="in other chain" evidence="1">
    <location>
        <begin position="125"/>
        <end position="127"/>
    </location>
    <ligand>
        <name>substrate</name>
        <note>ligand shared between dimeric partners</note>
    </ligand>
</feature>
<feature type="binding site" description="in other chain" evidence="1">
    <location>
        <position position="154"/>
    </location>
    <ligand>
        <name>ADP</name>
        <dbReference type="ChEBI" id="CHEBI:456216"/>
        <note>allosteric activator; ligand shared between dimeric partners</note>
    </ligand>
</feature>
<feature type="binding site" evidence="1">
    <location>
        <position position="162"/>
    </location>
    <ligand>
        <name>substrate</name>
        <note>ligand shared between dimeric partners</note>
    </ligand>
</feature>
<feature type="binding site" description="in other chain" evidence="1">
    <location>
        <begin position="169"/>
        <end position="171"/>
    </location>
    <ligand>
        <name>substrate</name>
        <note>ligand shared between dimeric partners</note>
    </ligand>
</feature>
<feature type="binding site" description="in other chain" evidence="1">
    <location>
        <begin position="185"/>
        <end position="187"/>
    </location>
    <ligand>
        <name>ADP</name>
        <dbReference type="ChEBI" id="CHEBI:456216"/>
        <note>allosteric activator; ligand shared between dimeric partners</note>
    </ligand>
</feature>
<feature type="binding site" description="in other chain" evidence="1">
    <location>
        <position position="211"/>
    </location>
    <ligand>
        <name>ADP</name>
        <dbReference type="ChEBI" id="CHEBI:456216"/>
        <note>allosteric activator; ligand shared between dimeric partners</note>
    </ligand>
</feature>
<feature type="binding site" description="in other chain" evidence="1">
    <location>
        <begin position="213"/>
        <end position="215"/>
    </location>
    <ligand>
        <name>ADP</name>
        <dbReference type="ChEBI" id="CHEBI:456216"/>
        <note>allosteric activator; ligand shared between dimeric partners</note>
    </ligand>
</feature>
<feature type="binding site" description="in other chain" evidence="1">
    <location>
        <position position="222"/>
    </location>
    <ligand>
        <name>substrate</name>
        <note>ligand shared between dimeric partners</note>
    </ligand>
</feature>
<feature type="binding site" evidence="1">
    <location>
        <position position="243"/>
    </location>
    <ligand>
        <name>substrate</name>
        <note>ligand shared between dimeric partners</note>
    </ligand>
</feature>
<feature type="binding site" description="in other chain" evidence="1">
    <location>
        <begin position="249"/>
        <end position="252"/>
    </location>
    <ligand>
        <name>substrate</name>
        <note>ligand shared between dimeric partners</note>
    </ligand>
</feature>
<organism>
    <name type="scientific">Clostridium botulinum (strain Okra / Type B1)</name>
    <dbReference type="NCBI Taxonomy" id="498213"/>
    <lineage>
        <taxon>Bacteria</taxon>
        <taxon>Bacillati</taxon>
        <taxon>Bacillota</taxon>
        <taxon>Clostridia</taxon>
        <taxon>Eubacteriales</taxon>
        <taxon>Clostridiaceae</taxon>
        <taxon>Clostridium</taxon>
    </lineage>
</organism>
<sequence>MRTIAVLTSGGDAPGMNAAIRAVVRTGLEKGLKVMGIQRGYNGLINGEIFEMDTHSVSDIIQRGGTILRTARCEEFRTEQGREKAAKILKAFGIDGLVVIGGDGSFHGAQLLSKLGINTVGLPGTIDNDLAYTDYTIGFDTSINTVLDAINKLRDTSTSHERVSVVEVMGRNCGDIALYTGVAGGAESIIIPEKEYNADKLCKQILQGKLKGKMHNLVLLAEGVGGANELAKYIEEVTGIETRSTILGHIQRGGSPTCMDRILASRMAYKAVELLISGKSSRVVGIKNGKIIDMDIDEALAVERSFDQELYDIATILSK</sequence>
<comment type="function">
    <text evidence="1">Catalyzes the phosphorylation of D-fructose 6-phosphate to fructose 1,6-bisphosphate by ATP, the first committing step of glycolysis.</text>
</comment>
<comment type="catalytic activity">
    <reaction evidence="1">
        <text>beta-D-fructose 6-phosphate + ATP = beta-D-fructose 1,6-bisphosphate + ADP + H(+)</text>
        <dbReference type="Rhea" id="RHEA:16109"/>
        <dbReference type="ChEBI" id="CHEBI:15378"/>
        <dbReference type="ChEBI" id="CHEBI:30616"/>
        <dbReference type="ChEBI" id="CHEBI:32966"/>
        <dbReference type="ChEBI" id="CHEBI:57634"/>
        <dbReference type="ChEBI" id="CHEBI:456216"/>
        <dbReference type="EC" id="2.7.1.11"/>
    </reaction>
</comment>
<comment type="cofactor">
    <cofactor evidence="1">
        <name>Mg(2+)</name>
        <dbReference type="ChEBI" id="CHEBI:18420"/>
    </cofactor>
</comment>
<comment type="activity regulation">
    <text evidence="1">Allosterically activated by ADP and other diphosphonucleosides, and allosterically inhibited by phosphoenolpyruvate.</text>
</comment>
<comment type="pathway">
    <text evidence="1">Carbohydrate degradation; glycolysis; D-glyceraldehyde 3-phosphate and glycerone phosphate from D-glucose: step 3/4.</text>
</comment>
<comment type="subunit">
    <text evidence="1">Homotetramer.</text>
</comment>
<comment type="subcellular location">
    <subcellularLocation>
        <location evidence="1">Cytoplasm</location>
    </subcellularLocation>
</comment>
<comment type="similarity">
    <text evidence="1">Belongs to the phosphofructokinase type A (PFKA) family. ATP-dependent PFK group I subfamily. Prokaryotic clade 'B1' sub-subfamily.</text>
</comment>
<protein>
    <recommendedName>
        <fullName evidence="1">ATP-dependent 6-phosphofructokinase</fullName>
        <shortName evidence="1">ATP-PFK</shortName>
        <shortName evidence="1">Phosphofructokinase</shortName>
        <ecNumber evidence="1">2.7.1.11</ecNumber>
    </recommendedName>
    <alternativeName>
        <fullName evidence="1">Phosphohexokinase</fullName>
    </alternativeName>
</protein>
<name>PFKA_CLOBK</name>
<reference key="1">
    <citation type="journal article" date="2007" name="PLoS ONE">
        <title>Analysis of the neurotoxin complex genes in Clostridium botulinum A1-A4 and B1 strains: BoNT/A3, /Ba4 and /B1 clusters are located within plasmids.</title>
        <authorList>
            <person name="Smith T.J."/>
            <person name="Hill K.K."/>
            <person name="Foley B.T."/>
            <person name="Detter J.C."/>
            <person name="Munk A.C."/>
            <person name="Bruce D.C."/>
            <person name="Doggett N.A."/>
            <person name="Smith L.A."/>
            <person name="Marks J.D."/>
            <person name="Xie G."/>
            <person name="Brettin T.S."/>
        </authorList>
    </citation>
    <scope>NUCLEOTIDE SEQUENCE [LARGE SCALE GENOMIC DNA]</scope>
    <source>
        <strain>Okra / Type B1</strain>
    </source>
</reference>
<proteinExistence type="inferred from homology"/>
<evidence type="ECO:0000255" key="1">
    <source>
        <dbReference type="HAMAP-Rule" id="MF_00339"/>
    </source>
</evidence>
<gene>
    <name evidence="1" type="primary">pfkA</name>
    <name type="ordered locus">CLD_1135</name>
</gene>